<comment type="catalytic activity">
    <reaction>
        <text>prephenate + H(+) = 3-phenylpyruvate + CO2 + H2O</text>
        <dbReference type="Rhea" id="RHEA:21648"/>
        <dbReference type="ChEBI" id="CHEBI:15377"/>
        <dbReference type="ChEBI" id="CHEBI:15378"/>
        <dbReference type="ChEBI" id="CHEBI:16526"/>
        <dbReference type="ChEBI" id="CHEBI:18005"/>
        <dbReference type="ChEBI" id="CHEBI:29934"/>
        <dbReference type="EC" id="4.2.1.51"/>
    </reaction>
</comment>
<comment type="pathway">
    <text>Amino-acid biosynthesis; L-phenylalanine biosynthesis; phenylpyruvate from prephenate: step 1/1.</text>
</comment>
<comment type="subunit">
    <text evidence="1">Homodimer.</text>
</comment>
<reference key="1">
    <citation type="journal article" date="2009" name="Nat. Genet.">
        <title>Comparative genomic and phylogeographic analysis of Mycobacterium leprae.</title>
        <authorList>
            <person name="Monot M."/>
            <person name="Honore N."/>
            <person name="Garnier T."/>
            <person name="Zidane N."/>
            <person name="Sherafi D."/>
            <person name="Paniz-Mondolfi A."/>
            <person name="Matsuoka M."/>
            <person name="Taylor G.M."/>
            <person name="Donoghue H.D."/>
            <person name="Bouwman A."/>
            <person name="Mays S."/>
            <person name="Watson C."/>
            <person name="Lockwood D."/>
            <person name="Khamispour A."/>
            <person name="Dowlati Y."/>
            <person name="Jianping S."/>
            <person name="Rea T.H."/>
            <person name="Vera-Cabrera L."/>
            <person name="Stefani M.M."/>
            <person name="Banu S."/>
            <person name="Macdonald M."/>
            <person name="Sapkota B.R."/>
            <person name="Spencer J.S."/>
            <person name="Thomas J."/>
            <person name="Harshman K."/>
            <person name="Singh P."/>
            <person name="Busso P."/>
            <person name="Gattiker A."/>
            <person name="Rougemont J."/>
            <person name="Brennan P.J."/>
            <person name="Cole S.T."/>
        </authorList>
    </citation>
    <scope>NUCLEOTIDE SEQUENCE [LARGE SCALE GENOMIC DNA]</scope>
    <source>
        <strain>Br4923</strain>
    </source>
</reference>
<accession>B8ZTU2</accession>
<keyword id="KW-0028">Amino-acid biosynthesis</keyword>
<keyword id="KW-0057">Aromatic amino acid biosynthesis</keyword>
<keyword id="KW-0456">Lyase</keyword>
<keyword id="KW-0584">Phenylalanine biosynthesis</keyword>
<sequence>MSVARIAYLGPEGTFTEAALLRMTAAGLVPDTGPDGLRRWPTESTPAALDAVRGGAADYACVPIENSIDGSVAPTLDNLAIGSPLQVFAETTLDVEFNIVVKPGITAADIRTLAAFPVAAAQVRQWLAAHLAGAELRPAYSNADAARQVAYGQVDAAVTSPLAATRWGLIALAAGIVDEPNARTRFVLVGMPGPPPARTGTDRTSAVLRIDNAPGMLVAALAEFGIRGIDLTRIESRPTRTELGTYLFFVDCVGHIDDGVVAEALKALHRRCADVCYLGSWPAGLATGPTVSPPPPDEASRWLARLRAGKPDQASEPGGGKL</sequence>
<dbReference type="EC" id="4.2.1.51"/>
<dbReference type="EMBL" id="FM211192">
    <property type="protein sequence ID" value="CAR70171.1"/>
    <property type="molecule type" value="Genomic_DNA"/>
</dbReference>
<dbReference type="SMR" id="B8ZTU2"/>
<dbReference type="KEGG" id="mlb:MLBr00078"/>
<dbReference type="HOGENOM" id="CLU_035008_0_0_11"/>
<dbReference type="UniPathway" id="UPA00121">
    <property type="reaction ID" value="UER00345"/>
</dbReference>
<dbReference type="Proteomes" id="UP000006900">
    <property type="component" value="Chromosome"/>
</dbReference>
<dbReference type="GO" id="GO:0005737">
    <property type="term" value="C:cytoplasm"/>
    <property type="evidence" value="ECO:0007669"/>
    <property type="project" value="TreeGrafter"/>
</dbReference>
<dbReference type="GO" id="GO:0004664">
    <property type="term" value="F:prephenate dehydratase activity"/>
    <property type="evidence" value="ECO:0007669"/>
    <property type="project" value="UniProtKB-EC"/>
</dbReference>
<dbReference type="GO" id="GO:0042803">
    <property type="term" value="F:protein homodimerization activity"/>
    <property type="evidence" value="ECO:0000250"/>
    <property type="project" value="UniProtKB"/>
</dbReference>
<dbReference type="GO" id="GO:0009094">
    <property type="term" value="P:L-phenylalanine biosynthetic process"/>
    <property type="evidence" value="ECO:0007669"/>
    <property type="project" value="UniProtKB-UniPathway"/>
</dbReference>
<dbReference type="CDD" id="cd04905">
    <property type="entry name" value="ACT_CM-PDT"/>
    <property type="match status" value="1"/>
</dbReference>
<dbReference type="CDD" id="cd13632">
    <property type="entry name" value="PBP2_Aa-PDT_like"/>
    <property type="match status" value="1"/>
</dbReference>
<dbReference type="FunFam" id="3.30.70.260:FF:000012">
    <property type="entry name" value="Prephenate dehydratase"/>
    <property type="match status" value="1"/>
</dbReference>
<dbReference type="FunFam" id="3.40.190.10:FF:000064">
    <property type="entry name" value="Prephenate dehydratase"/>
    <property type="match status" value="1"/>
</dbReference>
<dbReference type="FunFam" id="3.40.190.10:FF:000146">
    <property type="entry name" value="Prephenate dehydratase"/>
    <property type="match status" value="1"/>
</dbReference>
<dbReference type="Gene3D" id="3.30.70.260">
    <property type="match status" value="1"/>
</dbReference>
<dbReference type="Gene3D" id="3.40.190.10">
    <property type="entry name" value="Periplasmic binding protein-like II"/>
    <property type="match status" value="2"/>
</dbReference>
<dbReference type="InterPro" id="IPR045865">
    <property type="entry name" value="ACT-like_dom_sf"/>
</dbReference>
<dbReference type="InterPro" id="IPR002912">
    <property type="entry name" value="ACT_dom"/>
</dbReference>
<dbReference type="InterPro" id="IPR008242">
    <property type="entry name" value="Chor_mutase/pphenate_deHydtase"/>
</dbReference>
<dbReference type="InterPro" id="IPR001086">
    <property type="entry name" value="Preph_deHydtase"/>
</dbReference>
<dbReference type="InterPro" id="IPR018528">
    <property type="entry name" value="Preph_deHydtase_CS"/>
</dbReference>
<dbReference type="NCBIfam" id="NF008865">
    <property type="entry name" value="PRK11898.1"/>
    <property type="match status" value="1"/>
</dbReference>
<dbReference type="PANTHER" id="PTHR21022">
    <property type="entry name" value="PREPHENATE DEHYDRATASE P PROTEIN"/>
    <property type="match status" value="1"/>
</dbReference>
<dbReference type="PANTHER" id="PTHR21022:SF19">
    <property type="entry name" value="PREPHENATE DEHYDRATASE-RELATED"/>
    <property type="match status" value="1"/>
</dbReference>
<dbReference type="Pfam" id="PF01842">
    <property type="entry name" value="ACT"/>
    <property type="match status" value="1"/>
</dbReference>
<dbReference type="Pfam" id="PF00800">
    <property type="entry name" value="PDT"/>
    <property type="match status" value="1"/>
</dbReference>
<dbReference type="PIRSF" id="PIRSF001500">
    <property type="entry name" value="Chor_mut_pdt_Ppr"/>
    <property type="match status" value="1"/>
</dbReference>
<dbReference type="SUPFAM" id="SSF55021">
    <property type="entry name" value="ACT-like"/>
    <property type="match status" value="1"/>
</dbReference>
<dbReference type="SUPFAM" id="SSF53850">
    <property type="entry name" value="Periplasmic binding protein-like II"/>
    <property type="match status" value="1"/>
</dbReference>
<dbReference type="PROSITE" id="PS51671">
    <property type="entry name" value="ACT"/>
    <property type="match status" value="1"/>
</dbReference>
<dbReference type="PROSITE" id="PS00858">
    <property type="entry name" value="PREPHENATE_DEHYDR_2"/>
    <property type="match status" value="1"/>
</dbReference>
<dbReference type="PROSITE" id="PS51171">
    <property type="entry name" value="PREPHENATE_DEHYDR_3"/>
    <property type="match status" value="1"/>
</dbReference>
<gene>
    <name type="primary">pheA</name>
    <name type="ordered locus">MLBr00078</name>
</gene>
<protein>
    <recommendedName>
        <fullName>Prephenate dehydratase</fullName>
        <shortName>PDT</shortName>
        <ecNumber>4.2.1.51</ecNumber>
    </recommendedName>
</protein>
<proteinExistence type="inferred from homology"/>
<name>PHEA_MYCLB</name>
<evidence type="ECO:0000250" key="1"/>
<evidence type="ECO:0000255" key="2">
    <source>
        <dbReference type="PROSITE-ProRule" id="PRU00517"/>
    </source>
</evidence>
<evidence type="ECO:0000255" key="3">
    <source>
        <dbReference type="PROSITE-ProRule" id="PRU01007"/>
    </source>
</evidence>
<evidence type="ECO:0000256" key="4">
    <source>
        <dbReference type="SAM" id="MobiDB-lite"/>
    </source>
</evidence>
<organism>
    <name type="scientific">Mycobacterium leprae (strain Br4923)</name>
    <dbReference type="NCBI Taxonomy" id="561304"/>
    <lineage>
        <taxon>Bacteria</taxon>
        <taxon>Bacillati</taxon>
        <taxon>Actinomycetota</taxon>
        <taxon>Actinomycetes</taxon>
        <taxon>Mycobacteriales</taxon>
        <taxon>Mycobacteriaceae</taxon>
        <taxon>Mycobacterium</taxon>
    </lineage>
</organism>
<feature type="chain" id="PRO_0000382036" description="Prephenate dehydratase">
    <location>
        <begin position="1"/>
        <end position="322"/>
    </location>
</feature>
<feature type="domain" description="Prephenate dehydratase" evidence="2">
    <location>
        <begin position="5"/>
        <end position="191"/>
    </location>
</feature>
<feature type="domain" description="ACT" evidence="3">
    <location>
        <begin position="205"/>
        <end position="282"/>
    </location>
</feature>
<feature type="region of interest" description="Disordered" evidence="4">
    <location>
        <begin position="286"/>
        <end position="322"/>
    </location>
</feature>
<feature type="site" description="Essential for activity" evidence="1">
    <location>
        <position position="184"/>
    </location>
</feature>